<accession>P70295</accession>
<protein>
    <recommendedName>
        <fullName evidence="1">Lipid droplet-regulating VLDL assembly factor AUP1</fullName>
    </recommendedName>
    <alternativeName>
        <fullName evidence="4">Ancient ubiquitous protein 1</fullName>
    </alternativeName>
</protein>
<gene>
    <name evidence="6" type="primary">Aup1</name>
</gene>
<dbReference type="EMBL" id="U41736">
    <property type="protein sequence ID" value="AAC52839.1"/>
    <property type="molecule type" value="mRNA"/>
</dbReference>
<dbReference type="EMBL" id="BC016485">
    <property type="protein sequence ID" value="AAH16485.1"/>
    <property type="molecule type" value="mRNA"/>
</dbReference>
<dbReference type="CCDS" id="CCDS39526.1"/>
<dbReference type="RefSeq" id="NP_031543.3">
    <property type="nucleotide sequence ID" value="NM_007517.5"/>
</dbReference>
<dbReference type="SMR" id="P70295"/>
<dbReference type="FunCoup" id="P70295">
    <property type="interactions" value="2149"/>
</dbReference>
<dbReference type="STRING" id="10090.ENSMUSP00000090281"/>
<dbReference type="iPTMnet" id="P70295"/>
<dbReference type="PhosphoSitePlus" id="P70295"/>
<dbReference type="SwissPalm" id="P70295"/>
<dbReference type="jPOST" id="P70295"/>
<dbReference type="PaxDb" id="10090-ENSMUSP00000090281"/>
<dbReference type="ProteomicsDB" id="277209"/>
<dbReference type="Pumba" id="P70295"/>
<dbReference type="Ensembl" id="ENSMUST00000092618.10">
    <property type="protein sequence ID" value="ENSMUSP00000090281.8"/>
    <property type="gene ID" value="ENSMUSG00000068328.11"/>
</dbReference>
<dbReference type="GeneID" id="11993"/>
<dbReference type="KEGG" id="mmu:11993"/>
<dbReference type="UCSC" id="uc009clz.2">
    <property type="organism name" value="mouse"/>
</dbReference>
<dbReference type="AGR" id="MGI:107789"/>
<dbReference type="CTD" id="550"/>
<dbReference type="MGI" id="MGI:107789">
    <property type="gene designation" value="Aup1"/>
</dbReference>
<dbReference type="eggNOG" id="KOG2898">
    <property type="taxonomic scope" value="Eukaryota"/>
</dbReference>
<dbReference type="InParanoid" id="P70295"/>
<dbReference type="OrthoDB" id="1854593at2759"/>
<dbReference type="PRO" id="PR:P70295"/>
<dbReference type="Proteomes" id="UP000000589">
    <property type="component" value="Chromosome 6"/>
</dbReference>
<dbReference type="RNAct" id="P70295">
    <property type="molecule type" value="protein"/>
</dbReference>
<dbReference type="GO" id="GO:0005776">
    <property type="term" value="C:autophagosome"/>
    <property type="evidence" value="ECO:0007669"/>
    <property type="project" value="Ensembl"/>
</dbReference>
<dbReference type="GO" id="GO:0005789">
    <property type="term" value="C:endoplasmic reticulum membrane"/>
    <property type="evidence" value="ECO:0000250"/>
    <property type="project" value="UniProtKB"/>
</dbReference>
<dbReference type="GO" id="GO:0005811">
    <property type="term" value="C:lipid droplet"/>
    <property type="evidence" value="ECO:0000250"/>
    <property type="project" value="UniProtKB"/>
</dbReference>
<dbReference type="GO" id="GO:0043130">
    <property type="term" value="F:ubiquitin binding"/>
    <property type="evidence" value="ECO:0007669"/>
    <property type="project" value="InterPro"/>
</dbReference>
<dbReference type="GO" id="GO:0031624">
    <property type="term" value="F:ubiquitin conjugating enzyme binding"/>
    <property type="evidence" value="ECO:0000250"/>
    <property type="project" value="UniProtKB"/>
</dbReference>
<dbReference type="GO" id="GO:0031625">
    <property type="term" value="F:ubiquitin protein ligase binding"/>
    <property type="evidence" value="ECO:0000250"/>
    <property type="project" value="UniProtKB"/>
</dbReference>
<dbReference type="GO" id="GO:0036503">
    <property type="term" value="P:ERAD pathway"/>
    <property type="evidence" value="ECO:0000250"/>
    <property type="project" value="UniProtKB"/>
</dbReference>
<dbReference type="GO" id="GO:0140042">
    <property type="term" value="P:lipid droplet formation"/>
    <property type="evidence" value="ECO:0000250"/>
    <property type="project" value="UniProtKB"/>
</dbReference>
<dbReference type="GO" id="GO:0034389">
    <property type="term" value="P:lipid droplet organization"/>
    <property type="evidence" value="ECO:0000250"/>
    <property type="project" value="UniProtKB"/>
</dbReference>
<dbReference type="GO" id="GO:0061724">
    <property type="term" value="P:lipophagy"/>
    <property type="evidence" value="ECO:0007669"/>
    <property type="project" value="Ensembl"/>
</dbReference>
<dbReference type="GO" id="GO:1990044">
    <property type="term" value="P:protein localization to lipid droplet"/>
    <property type="evidence" value="ECO:0000250"/>
    <property type="project" value="UniProtKB"/>
</dbReference>
<dbReference type="GO" id="GO:0009615">
    <property type="term" value="P:response to virus"/>
    <property type="evidence" value="ECO:0007669"/>
    <property type="project" value="Ensembl"/>
</dbReference>
<dbReference type="GO" id="GO:0030970">
    <property type="term" value="P:retrograde protein transport, ER to cytosol"/>
    <property type="evidence" value="ECO:0007669"/>
    <property type="project" value="Ensembl"/>
</dbReference>
<dbReference type="CDD" id="cd14420">
    <property type="entry name" value="CUE_AUP1"/>
    <property type="match status" value="1"/>
</dbReference>
<dbReference type="FunFam" id="1.10.8.10:FF:000049">
    <property type="entry name" value="ancient ubiquitous protein 1 isoform X2"/>
    <property type="match status" value="1"/>
</dbReference>
<dbReference type="Gene3D" id="1.10.8.10">
    <property type="entry name" value="DNA helicase RuvA subunit, C-terminal domain"/>
    <property type="match status" value="1"/>
</dbReference>
<dbReference type="InterPro" id="IPR048056">
    <property type="entry name" value="AUP1_CUE"/>
</dbReference>
<dbReference type="InterPro" id="IPR003892">
    <property type="entry name" value="CUE"/>
</dbReference>
<dbReference type="PANTHER" id="PTHR15486">
    <property type="entry name" value="ANCIENT UBIQUITOUS PROTEIN"/>
    <property type="match status" value="1"/>
</dbReference>
<dbReference type="PANTHER" id="PTHR15486:SF96">
    <property type="entry name" value="LIPID DROPLET-REGULATING VLDL ASSEMBLY FACTOR AUP1"/>
    <property type="match status" value="1"/>
</dbReference>
<dbReference type="Pfam" id="PF02845">
    <property type="entry name" value="CUE"/>
    <property type="match status" value="1"/>
</dbReference>
<dbReference type="SMART" id="SM00546">
    <property type="entry name" value="CUE"/>
    <property type="match status" value="1"/>
</dbReference>
<dbReference type="SUPFAM" id="SSF69593">
    <property type="entry name" value="Glycerol-3-phosphate (1)-acyltransferase"/>
    <property type="match status" value="1"/>
</dbReference>
<dbReference type="PROSITE" id="PS51140">
    <property type="entry name" value="CUE"/>
    <property type="match status" value="1"/>
</dbReference>
<keyword id="KW-0007">Acetylation</keyword>
<keyword id="KW-0256">Endoplasmic reticulum</keyword>
<keyword id="KW-0551">Lipid droplet</keyword>
<keyword id="KW-0472">Membrane</keyword>
<keyword id="KW-0597">Phosphoprotein</keyword>
<keyword id="KW-1185">Reference proteome</keyword>
<keyword id="KW-0832">Ubl conjugation</keyword>
<organism>
    <name type="scientific">Mus musculus</name>
    <name type="common">Mouse</name>
    <dbReference type="NCBI Taxonomy" id="10090"/>
    <lineage>
        <taxon>Eukaryota</taxon>
        <taxon>Metazoa</taxon>
        <taxon>Chordata</taxon>
        <taxon>Craniata</taxon>
        <taxon>Vertebrata</taxon>
        <taxon>Euteleostomi</taxon>
        <taxon>Mammalia</taxon>
        <taxon>Eutheria</taxon>
        <taxon>Euarchontoglires</taxon>
        <taxon>Glires</taxon>
        <taxon>Rodentia</taxon>
        <taxon>Myomorpha</taxon>
        <taxon>Muroidea</taxon>
        <taxon>Muridae</taxon>
        <taxon>Murinae</taxon>
        <taxon>Mus</taxon>
        <taxon>Mus</taxon>
    </lineage>
</organism>
<comment type="function">
    <text evidence="1">Plays a role in the translocation of terminally misfolded proteins from the endoplasmic reticulum lumen to the cytoplasm and their degradation by the proteasome (By similarity). Plays a role in lipid droplet formation (By similarity). Induces lipid droplet clustering (By similarity). Recruits ubiquitin-conjugating enzyme UBE2G2 to lipid droplets which facilitates its interaction with ubiquitin ligases AMFR/gp78 and RNF139/TRC8, leading to sterol-induced ubiquitination of HMGCR and its subsequent proteasomal degradation (By similarity). Also required for the degradation of INSIG1, SREBF1 and SREBF2 (By similarity). Plays a role in regulating assembly and secretion of very low density lipoprotein particles and stability of apolipoprotein APOB (By similarity).</text>
</comment>
<comment type="subunit">
    <text evidence="1">Identified in a complex that contains SEL1L, OS9, FAF2/UBXD8, UBE2J1/UBC6E and AUP1 (By similarity). Interacts with the cytoplasmic tail of ITGA2B, ITGA1, ITGA2, ITGA5, ITGAV and ITGAM (By similarity). Interacts (via C-terminus) with UBE2G2; the interaction recruits UBE2G2 to lipid droplets (By similarity). Interacts with ubiquitin ligases AMFR/gp78 and RNF139/TRC8; this promotes interaction of UBE2G2 with AMFR and RNF139 (By similarity). Interacts with apolipoprotein APOB (By similarity).</text>
</comment>
<comment type="subcellular location">
    <subcellularLocation>
        <location evidence="1">Endoplasmic reticulum membrane</location>
        <topology evidence="1">Peripheral membrane protein</topology>
    </subcellularLocation>
    <subcellularLocation>
        <location evidence="1">Lipid droplet</location>
    </subcellularLocation>
</comment>
<comment type="tissue specificity">
    <text>Ubiquitous.</text>
</comment>
<comment type="domain">
    <text evidence="1">The CUE domain is required for interaction with the ER quality control machinery and misfolded substrates, ubiquitination, lipid clustering and interaction with AMFR but is not required for localization to lipid droplets.</text>
</comment>
<comment type="PTM">
    <text evidence="1">Monoubiquitinated and diubiquitinated.</text>
</comment>
<comment type="similarity">
    <text evidence="5">Belongs to the AUP1 family.</text>
</comment>
<proteinExistence type="evidence at protein level"/>
<reference key="1">
    <citation type="journal article" date="1996" name="Genomics">
        <title>Aup1, a novel gene on mouse chromosome 6 and human chromosome 2p13.</title>
        <authorList>
            <person name="Jang W."/>
            <person name="Weber J.S."/>
            <person name="Bashir R."/>
            <person name="Bushby K."/>
            <person name="Meisler M.H."/>
        </authorList>
    </citation>
    <scope>NUCLEOTIDE SEQUENCE [MRNA]</scope>
    <source>
        <strain>C57BL/6J</strain>
    </source>
</reference>
<reference key="2">
    <citation type="journal article" date="2004" name="Genome Res.">
        <title>The status, quality, and expansion of the NIH full-length cDNA project: the Mammalian Gene Collection (MGC).</title>
        <authorList>
            <consortium name="The MGC Project Team"/>
        </authorList>
    </citation>
    <scope>NUCLEOTIDE SEQUENCE [LARGE SCALE MRNA]</scope>
    <source>
        <strain>FVB/N</strain>
        <tissue>Mammary gland</tissue>
    </source>
</reference>
<reference key="3">
    <citation type="journal article" date="2010" name="Cell">
        <title>A tissue-specific atlas of mouse protein phosphorylation and expression.</title>
        <authorList>
            <person name="Huttlin E.L."/>
            <person name="Jedrychowski M.P."/>
            <person name="Elias J.E."/>
            <person name="Goswami T."/>
            <person name="Rad R."/>
            <person name="Beausoleil S.A."/>
            <person name="Villen J."/>
            <person name="Haas W."/>
            <person name="Sowa M.E."/>
            <person name="Gygi S.P."/>
        </authorList>
    </citation>
    <scope>IDENTIFICATION BY MASS SPECTROMETRY [LARGE SCALE ANALYSIS]</scope>
    <source>
        <tissue>Kidney</tissue>
        <tissue>Pancreas</tissue>
        <tissue>Spleen</tissue>
        <tissue>Testis</tissue>
    </source>
</reference>
<evidence type="ECO:0000250" key="1">
    <source>
        <dbReference type="UniProtKB" id="Q9Y679"/>
    </source>
</evidence>
<evidence type="ECO:0000255" key="2">
    <source>
        <dbReference type="PROSITE-ProRule" id="PRU00468"/>
    </source>
</evidence>
<evidence type="ECO:0000256" key="3">
    <source>
        <dbReference type="SAM" id="MobiDB-lite"/>
    </source>
</evidence>
<evidence type="ECO:0000303" key="4">
    <source>
    </source>
</evidence>
<evidence type="ECO:0000305" key="5"/>
<evidence type="ECO:0000312" key="6">
    <source>
        <dbReference type="MGI" id="MGI:107789"/>
    </source>
</evidence>
<sequence>MEPPPAPGPERLFDSHRLPSDGFLLLALLLYAPVGLCLLVLRLFLGLHVFLVSCALPDSVLRRFVVRTMCAVLGLVARQEDSGLRDHRVRVLISNHVTPFDHNIVNLLTTCSTPLLNSPPSFVCWSRGFMEMDRRVELVESLKKFCASTRLPPTPLLLFPEEEATNGREGLLRFSSWPFSIQDVVQPLTLQVQRPLVSVTVSDASWVSELLWSLFVPFTVYQVRWLHPIRRQLGEESEEFALRVQQLVAKELGQIGTRLTPADKAEHMKRQRHPRLRPQSVQSSFPSPPSPSSDVQLTTLAHRVKEVLPHVPLNVIQRDLARTGCVDLTITNLLEGAVAFMPEDVTEGSQSPPAPSAPKFPSSGLATPQPTALTFAKSSWARQESLQERKQALYEYARRRFRERQAQEAE</sequence>
<feature type="chain" id="PRO_0000020766" description="Lipid droplet-regulating VLDL assembly factor AUP1">
    <location>
        <begin position="1"/>
        <end position="410"/>
    </location>
</feature>
<feature type="topological domain" description="Cytoplasmic" evidence="1">
    <location>
        <begin position="1"/>
        <end position="20"/>
    </location>
</feature>
<feature type="intramembrane region" evidence="1">
    <location>
        <begin position="21"/>
        <end position="41"/>
    </location>
</feature>
<feature type="topological domain" description="Cytoplasmic" evidence="1">
    <location>
        <begin position="42"/>
        <end position="410"/>
    </location>
</feature>
<feature type="domain" description="CUE" evidence="2">
    <location>
        <begin position="296"/>
        <end position="338"/>
    </location>
</feature>
<feature type="region of interest" description="Disordered" evidence="3">
    <location>
        <begin position="258"/>
        <end position="295"/>
    </location>
</feature>
<feature type="region of interest" description="Disordered" evidence="3">
    <location>
        <begin position="344"/>
        <end position="369"/>
    </location>
</feature>
<feature type="modified residue" description="N-acetylmethionine" evidence="1">
    <location>
        <position position="1"/>
    </location>
</feature>
<feature type="modified residue" description="Phosphoserine" evidence="1">
    <location>
        <position position="292"/>
    </location>
</feature>
<feature type="modified residue" description="Phosphoserine" evidence="1">
    <location>
        <position position="363"/>
    </location>
</feature>
<feature type="modified residue" description="Phosphothreonine" evidence="1">
    <location>
        <position position="367"/>
    </location>
</feature>
<name>AUP1_MOUSE</name>